<accession>P0DC98</accession>
<accession>Q8K873</accession>
<proteinExistence type="inferred from homology"/>
<sequence length="920" mass="104699">MPLKKLESSNNQTIIAEEVALLKEMLENITRRMIGDDAFTVIESIMVLSEKQDYIELEKVVANISNQEMEVISRYFSILPLLINISEDVDLAYEINHQNNTDTDYLGKLALTIKDLAGKDNGKDILEQVNVVPVLTAHPTQVQRKTILELTTHIHKLLRKYRDAKAGVINLEKWRQELYRYIEMIMQTDIIREKKLQVKNEIKNVMQYYDGSLIQAVTKLTTEYKNLAQKHGLELDNPKPITMGMWIGGDRDGNPFVTAETLCLSATVQSEVILNYYIDKLAALYRTFSLSSTLVQPNSEVERLASLSQDQSIYRGNEPYRRAFHYIQSRLKQTQIQLTNQPAARMSSSVGLNTSAWSSPASLENPILAYDSPVDFKADLKAIEQSLLDNGNSALIEGDLREVMQAVDIFGFFLASIDMRQDSSVQEACVAELLKGANIVDDYSSLSETEKCDVLLQQLMEEPRTLSSAAVAKSDLLEKELAIYTTARELKDKLGEEVIKQHIISHTESVSDMFELAIMLKEVGLVDQQRARVQIVPLFETIEDLDNARDIMAAYLSHDIVKSWIATNRNYQEIMLGYSDSNKDGGYLASGWTLYKAQNELTAIGEEHGVKITFFHGRGGTVGRGGGPSYDAITSQPFGSIKDRIRLTEQGEIIENKYGNKDVAYYHLEMLISASINRMVTQMITDPNEIDSFREIMDSIVADSNTIYRKLVFDNPHFYDYFFEASPIKEVSSLNIGSRPAARKTITEITGLRAIPWVFSWSQNRIMFPGWYGVGSAFKRYIDRAQGNLERLQHMYQTWPFFHSLLSNVDMVLSKSNMNIAFQYAQLAESQDVRDVFYEILDEWQLTKNVILAIQDHDDLLEDNPSLKHSLKSRLPYFNVLNYIQIELIKRWRNNQLDENDEKLIHTTINGIATGLRNSG</sequence>
<reference key="1">
    <citation type="journal article" date="2002" name="Proc. Natl. Acad. Sci. U.S.A.">
        <title>Genome sequence of a serotype M3 strain of group A Streptococcus: phage-encoded toxins, the high-virulence phenotype, and clone emergence.</title>
        <authorList>
            <person name="Beres S.B."/>
            <person name="Sylva G.L."/>
            <person name="Barbian K.D."/>
            <person name="Lei B."/>
            <person name="Hoff J.S."/>
            <person name="Mammarella N.D."/>
            <person name="Liu M.-Y."/>
            <person name="Smoot J.C."/>
            <person name="Porcella S.F."/>
            <person name="Parkins L.D."/>
            <person name="Campbell D.S."/>
            <person name="Smith T.M."/>
            <person name="McCormick J.K."/>
            <person name="Leung D.Y.M."/>
            <person name="Schlievert P.M."/>
            <person name="Musser J.M."/>
        </authorList>
    </citation>
    <scope>NUCLEOTIDE SEQUENCE [LARGE SCALE GENOMIC DNA]</scope>
    <source>
        <strain>ATCC BAA-595 / MGAS315</strain>
    </source>
</reference>
<dbReference type="EC" id="4.1.1.31" evidence="1"/>
<dbReference type="EMBL" id="AE014074">
    <property type="protein sequence ID" value="AAM79037.1"/>
    <property type="molecule type" value="Genomic_DNA"/>
</dbReference>
<dbReference type="RefSeq" id="WP_032461387.1">
    <property type="nucleotide sequence ID" value="NC_004070.1"/>
</dbReference>
<dbReference type="SMR" id="P0DC98"/>
<dbReference type="KEGG" id="spg:SpyM3_0430"/>
<dbReference type="HOGENOM" id="CLU_006557_2_0_9"/>
<dbReference type="Proteomes" id="UP000000564">
    <property type="component" value="Chromosome"/>
</dbReference>
<dbReference type="GO" id="GO:0005829">
    <property type="term" value="C:cytosol"/>
    <property type="evidence" value="ECO:0007669"/>
    <property type="project" value="TreeGrafter"/>
</dbReference>
<dbReference type="GO" id="GO:0000287">
    <property type="term" value="F:magnesium ion binding"/>
    <property type="evidence" value="ECO:0007669"/>
    <property type="project" value="UniProtKB-UniRule"/>
</dbReference>
<dbReference type="GO" id="GO:0008964">
    <property type="term" value="F:phosphoenolpyruvate carboxylase activity"/>
    <property type="evidence" value="ECO:0007669"/>
    <property type="project" value="UniProtKB-UniRule"/>
</dbReference>
<dbReference type="GO" id="GO:0015977">
    <property type="term" value="P:carbon fixation"/>
    <property type="evidence" value="ECO:0007669"/>
    <property type="project" value="UniProtKB-UniRule"/>
</dbReference>
<dbReference type="GO" id="GO:0006107">
    <property type="term" value="P:oxaloacetate metabolic process"/>
    <property type="evidence" value="ECO:0007669"/>
    <property type="project" value="UniProtKB-UniRule"/>
</dbReference>
<dbReference type="GO" id="GO:0006099">
    <property type="term" value="P:tricarboxylic acid cycle"/>
    <property type="evidence" value="ECO:0007669"/>
    <property type="project" value="InterPro"/>
</dbReference>
<dbReference type="Gene3D" id="1.20.1440.90">
    <property type="entry name" value="Phosphoenolpyruvate/pyruvate domain"/>
    <property type="match status" value="1"/>
</dbReference>
<dbReference type="HAMAP" id="MF_00595">
    <property type="entry name" value="PEPcase_type1"/>
    <property type="match status" value="1"/>
</dbReference>
<dbReference type="InterPro" id="IPR021135">
    <property type="entry name" value="PEP_COase"/>
</dbReference>
<dbReference type="InterPro" id="IPR022805">
    <property type="entry name" value="PEP_COase_bac/pln-type"/>
</dbReference>
<dbReference type="InterPro" id="IPR018129">
    <property type="entry name" value="PEP_COase_Lys_AS"/>
</dbReference>
<dbReference type="InterPro" id="IPR033129">
    <property type="entry name" value="PEPCASE_His_AS"/>
</dbReference>
<dbReference type="InterPro" id="IPR015813">
    <property type="entry name" value="Pyrv/PenolPyrv_kinase-like_dom"/>
</dbReference>
<dbReference type="NCBIfam" id="NF000584">
    <property type="entry name" value="PRK00009.1"/>
    <property type="match status" value="1"/>
</dbReference>
<dbReference type="PANTHER" id="PTHR30523">
    <property type="entry name" value="PHOSPHOENOLPYRUVATE CARBOXYLASE"/>
    <property type="match status" value="1"/>
</dbReference>
<dbReference type="PANTHER" id="PTHR30523:SF6">
    <property type="entry name" value="PHOSPHOENOLPYRUVATE CARBOXYLASE"/>
    <property type="match status" value="1"/>
</dbReference>
<dbReference type="Pfam" id="PF00311">
    <property type="entry name" value="PEPcase"/>
    <property type="match status" value="1"/>
</dbReference>
<dbReference type="PRINTS" id="PR00150">
    <property type="entry name" value="PEPCARBXLASE"/>
</dbReference>
<dbReference type="SUPFAM" id="SSF51621">
    <property type="entry name" value="Phosphoenolpyruvate/pyruvate domain"/>
    <property type="match status" value="1"/>
</dbReference>
<dbReference type="PROSITE" id="PS00781">
    <property type="entry name" value="PEPCASE_1"/>
    <property type="match status" value="1"/>
</dbReference>
<dbReference type="PROSITE" id="PS00393">
    <property type="entry name" value="PEPCASE_2"/>
    <property type="match status" value="1"/>
</dbReference>
<name>CAPP_STRP3</name>
<protein>
    <recommendedName>
        <fullName evidence="1">Phosphoenolpyruvate carboxylase</fullName>
        <shortName evidence="1">PEPC</shortName>
        <shortName evidence="1">PEPCase</shortName>
        <ecNumber evidence="1">4.1.1.31</ecNumber>
    </recommendedName>
</protein>
<comment type="function">
    <text evidence="1">Forms oxaloacetate, a four-carbon dicarboxylic acid source for the tricarboxylic acid cycle.</text>
</comment>
<comment type="catalytic activity">
    <reaction evidence="1">
        <text>oxaloacetate + phosphate = phosphoenolpyruvate + hydrogencarbonate</text>
        <dbReference type="Rhea" id="RHEA:28370"/>
        <dbReference type="ChEBI" id="CHEBI:16452"/>
        <dbReference type="ChEBI" id="CHEBI:17544"/>
        <dbReference type="ChEBI" id="CHEBI:43474"/>
        <dbReference type="ChEBI" id="CHEBI:58702"/>
        <dbReference type="EC" id="4.1.1.31"/>
    </reaction>
</comment>
<comment type="cofactor">
    <cofactor evidence="1">
        <name>Mg(2+)</name>
        <dbReference type="ChEBI" id="CHEBI:18420"/>
    </cofactor>
</comment>
<comment type="similarity">
    <text evidence="1">Belongs to the PEPCase type 1 family.</text>
</comment>
<evidence type="ECO:0000255" key="1">
    <source>
        <dbReference type="HAMAP-Rule" id="MF_00595"/>
    </source>
</evidence>
<gene>
    <name evidence="1" type="primary">ppc</name>
    <name type="ordered locus">SpyM3_0430</name>
</gene>
<keyword id="KW-0120">Carbon dioxide fixation</keyword>
<keyword id="KW-0456">Lyase</keyword>
<keyword id="KW-0460">Magnesium</keyword>
<organism>
    <name type="scientific">Streptococcus pyogenes serotype M3 (strain ATCC BAA-595 / MGAS315)</name>
    <dbReference type="NCBI Taxonomy" id="198466"/>
    <lineage>
        <taxon>Bacteria</taxon>
        <taxon>Bacillati</taxon>
        <taxon>Bacillota</taxon>
        <taxon>Bacilli</taxon>
        <taxon>Lactobacillales</taxon>
        <taxon>Streptococcaceae</taxon>
        <taxon>Streptococcus</taxon>
    </lineage>
</organism>
<feature type="chain" id="PRO_0000166633" description="Phosphoenolpyruvate carboxylase">
    <location>
        <begin position="1"/>
        <end position="920"/>
    </location>
</feature>
<feature type="active site" evidence="1">
    <location>
        <position position="138"/>
    </location>
</feature>
<feature type="active site" evidence="1">
    <location>
        <position position="583"/>
    </location>
</feature>